<sequence length="1035" mass="114887">MGSKRSVPSRHRSLTTYEVMFAVLFVILVALCAGLIAVSWLSIQGSVKDAAFGKSHEARGTLKIISGATYNPHLQDKLSVDFKVLAFDIQQMIDDIFQSSNLKNEYKNSRVLQFENGSIIVIFDLLFDQWVSDKNVKEELIQGIEANKSSQLVTFHIDLNSIDITASLENFSTISPATTSEKLTTSIPLATPGNVSIECPPDSRLCADALKCIAIDLFCDGELNCPDGSDEDNKTCATACDGRFLLTGSSGSFEALHYPKPSNNTSAVCRWIIRVNQGLSIQLNFDYFNTYYADVLNIYEGMGSSKILRASLWSNNPGIIRIFSNQVTATFLIQSDESDYIGFKVTYTAFNSKELNNYEKINCNFEDGFCFWIQDLNDDNEWERTQGSTFPPSTGPTFDHTFGNESGFYISTPTGPGGRRERVGLLTLPLDPTPEQACLSFWYYMYGENVYKLSINISSDQNMEKTIFQKEGNYGQNWNYGQVTLNETVEFKVSFYGFKNQILSDIALDDISLTYGICNVSVYPEPTLVPTPPPELPTDCGGPHDLWEPNTTFTSINFPNSYPNQAFCIWNLNAQKGKNIQLHFQEFDLENIADVVEIRDGEGDDSLFLAVYTGPGPVNDVFSTTNRMTVLFITDNMLAKQGFKANFTTGYGLGIPEPCKEDNFQCKDGECIPLVNLCDGFPHCKDGSDEAHCVRLFNGTTDSSGLVQFRIQSIWHVACAENWTTQISDDVCQLLGLGTGNSSVPTFSTGGGPYVNLNTAPNGSLILTPSQQCLEDSLILLQCNYKSCGKKLVTQEVSPKIVGGSDSREGAWPWVVALYFDDQQVCGASLVSRDWLVSAAHCVYGRNMEPSKWKAVLGLHMASNLTSPQIETRLIDQIVINPHYNKRRKNNDIAMMHLEMKVNYTDYIQPICLPEENQVFPPGRICSIAGWGALIYQGSTADVLQEADVPLLSNEKCQQQMPEYNITENMVCAGYEAGGVDSCQGDSGGPLMCQENNRWLLAGVTSFGYQCALPNRPGVYARVPRFTEWIQSFLH</sequence>
<organism>
    <name type="scientific">Bos taurus</name>
    <name type="common">Bovine</name>
    <dbReference type="NCBI Taxonomy" id="9913"/>
    <lineage>
        <taxon>Eukaryota</taxon>
        <taxon>Metazoa</taxon>
        <taxon>Chordata</taxon>
        <taxon>Craniata</taxon>
        <taxon>Vertebrata</taxon>
        <taxon>Euteleostomi</taxon>
        <taxon>Mammalia</taxon>
        <taxon>Eutheria</taxon>
        <taxon>Laurasiatheria</taxon>
        <taxon>Artiodactyla</taxon>
        <taxon>Ruminantia</taxon>
        <taxon>Pecora</taxon>
        <taxon>Bovidae</taxon>
        <taxon>Bovinae</taxon>
        <taxon>Bos</taxon>
    </lineage>
</organism>
<proteinExistence type="evidence at protein level"/>
<feature type="initiator methionine" description="Removed" evidence="2">
    <location>
        <position position="1"/>
    </location>
</feature>
<feature type="chain" id="PRO_0000027717" description="Enteropeptidase non-catalytic heavy chain">
    <location>
        <begin position="2"/>
        <end position="800"/>
    </location>
</feature>
<feature type="chain" id="PRO_0000027718" description="Enteropeptidase catalytic light chain">
    <location>
        <begin position="801"/>
        <end position="1035"/>
    </location>
</feature>
<feature type="topological domain" description="Cytoplasmic" evidence="2">
    <location>
        <begin position="2"/>
        <end position="18"/>
    </location>
</feature>
<feature type="transmembrane region" description="Helical; Signal-anchor for type II membrane protein" evidence="2">
    <location>
        <begin position="19"/>
        <end position="47"/>
    </location>
</feature>
<feature type="topological domain" description="Extracellular" evidence="2">
    <location>
        <begin position="48"/>
        <end position="1035"/>
    </location>
</feature>
<feature type="domain" description="SEA" evidence="6">
    <location>
        <begin position="54"/>
        <end position="169"/>
    </location>
</feature>
<feature type="domain" description="LDL-receptor class A 1" evidence="4">
    <location>
        <begin position="197"/>
        <end position="238"/>
    </location>
</feature>
<feature type="domain" description="CUB 1" evidence="3">
    <location>
        <begin position="240"/>
        <end position="350"/>
    </location>
</feature>
<feature type="domain" description="MAM" evidence="5">
    <location>
        <begin position="358"/>
        <end position="520"/>
    </location>
</feature>
<feature type="domain" description="CUB 2" evidence="3">
    <location>
        <begin position="540"/>
        <end position="650"/>
    </location>
</feature>
<feature type="domain" description="LDL-receptor class A 2" evidence="4">
    <location>
        <begin position="657"/>
        <end position="695"/>
    </location>
</feature>
<feature type="domain" description="SRCR" evidence="7">
    <location>
        <begin position="694"/>
        <end position="787"/>
    </location>
</feature>
<feature type="domain" description="Peptidase S1" evidence="8">
    <location>
        <begin position="801"/>
        <end position="1035"/>
    </location>
</feature>
<feature type="active site" description="Charge relay system" evidence="9">
    <location>
        <position position="841"/>
    </location>
</feature>
<feature type="active site" description="Charge relay system" evidence="9">
    <location>
        <position position="892"/>
    </location>
</feature>
<feature type="active site" description="Charge relay system" evidence="9">
    <location>
        <position position="987"/>
    </location>
</feature>
<feature type="lipid moiety-binding region" description="N-myristoyl glycine" evidence="2">
    <location>
        <position position="2"/>
    </location>
</feature>
<feature type="glycosylation site" description="N-linked (GlcNAc...) asparagine" evidence="2">
    <location>
        <position position="116"/>
    </location>
</feature>
<feature type="glycosylation site" description="N-linked (GlcNAc...) asparagine" evidence="2">
    <location>
        <position position="147"/>
    </location>
</feature>
<feature type="glycosylation site" description="N-linked (GlcNAc...) asparagine" evidence="2">
    <location>
        <position position="170"/>
    </location>
</feature>
<feature type="glycosylation site" description="N-linked (GlcNAc...) asparagine" evidence="2">
    <location>
        <position position="194"/>
    </location>
</feature>
<feature type="glycosylation site" description="N-linked (GlcNAc...) asparagine" evidence="2">
    <location>
        <position position="233"/>
    </location>
</feature>
<feature type="glycosylation site" description="N-linked (GlcNAc...) asparagine" evidence="2">
    <location>
        <position position="263"/>
    </location>
</feature>
<feature type="glycosylation site" description="N-linked (GlcNAc...) asparagine" evidence="2">
    <location>
        <position position="264"/>
    </location>
</feature>
<feature type="glycosylation site" description="N-linked (GlcNAc...) asparagine" evidence="2">
    <location>
        <position position="404"/>
    </location>
</feature>
<feature type="glycosylation site" description="N-linked (GlcNAc...) asparagine" evidence="2">
    <location>
        <position position="456"/>
    </location>
</feature>
<feature type="glycosylation site" description="N-linked (GlcNAc...) asparagine" evidence="2">
    <location>
        <position position="486"/>
    </location>
</feature>
<feature type="glycosylation site" description="N-linked (GlcNAc...) asparagine" evidence="2">
    <location>
        <position position="519"/>
    </location>
</feature>
<feature type="glycosylation site" description="N-linked (GlcNAc...) asparagine" evidence="2">
    <location>
        <position position="550"/>
    </location>
</feature>
<feature type="glycosylation site" description="N-linked (GlcNAc...) asparagine" evidence="2">
    <location>
        <position position="646"/>
    </location>
</feature>
<feature type="glycosylation site" description="N-linked (GlcNAc...) asparagine" evidence="2">
    <location>
        <position position="698"/>
    </location>
</feature>
<feature type="glycosylation site" description="N-linked (GlcNAc...) asparagine" evidence="2">
    <location>
        <position position="722"/>
    </location>
</feature>
<feature type="glycosylation site" description="N-linked (GlcNAc...) asparagine" evidence="2">
    <location>
        <position position="741"/>
    </location>
</feature>
<feature type="glycosylation site" description="N-linked (GlcNAc...) asparagine" evidence="2">
    <location>
        <position position="762"/>
    </location>
</feature>
<feature type="glycosylation site" description="N-linked (GlcNAc...) asparagine" evidence="2">
    <location>
        <position position="864"/>
    </location>
</feature>
<feature type="glycosylation site" description="N-linked (GlcNAc...) asparagine" evidence="2">
    <location>
        <position position="903"/>
    </location>
</feature>
<feature type="glycosylation site" description="N-linked (GlcNAc...) asparagine" evidence="2">
    <location>
        <position position="965"/>
    </location>
</feature>
<feature type="disulfide bond" evidence="1">
    <location>
        <begin position="199"/>
        <end position="212"/>
    </location>
</feature>
<feature type="disulfide bond" evidence="1">
    <location>
        <begin position="206"/>
        <end position="225"/>
    </location>
</feature>
<feature type="disulfide bond" evidence="1">
    <location>
        <begin position="219"/>
        <end position="236"/>
    </location>
</feature>
<feature type="disulfide bond" evidence="1">
    <location>
        <begin position="240"/>
        <end position="269"/>
    </location>
</feature>
<feature type="disulfide bond" evidence="1">
    <location>
        <begin position="540"/>
        <end position="568"/>
    </location>
</feature>
<feature type="disulfide bond" evidence="1">
    <location>
        <begin position="659"/>
        <end position="671"/>
    </location>
</feature>
<feature type="disulfide bond" evidence="1">
    <location>
        <begin position="666"/>
        <end position="684"/>
    </location>
</feature>
<feature type="disulfide bond" evidence="1">
    <location>
        <begin position="678"/>
        <end position="693"/>
    </location>
</feature>
<feature type="disulfide bond" evidence="1">
    <location>
        <begin position="773"/>
        <end position="783"/>
    </location>
</feature>
<feature type="disulfide bond" description="Interchain (between heavy and light chains)">
    <location>
        <begin position="788"/>
        <end position="912"/>
    </location>
</feature>
<feature type="disulfide bond" evidence="1">
    <location>
        <begin position="826"/>
        <end position="842"/>
    </location>
</feature>
<feature type="disulfide bond" evidence="1">
    <location>
        <begin position="926"/>
        <end position="993"/>
    </location>
</feature>
<feature type="disulfide bond" evidence="1">
    <location>
        <begin position="957"/>
        <end position="972"/>
    </location>
</feature>
<feature type="disulfide bond" evidence="1">
    <location>
        <begin position="983"/>
        <end position="1011"/>
    </location>
</feature>
<feature type="splice variant" id="VSP_005386" description="In isoform Short." evidence="10">
    <location>
        <begin position="166"/>
        <end position="192"/>
    </location>
</feature>
<feature type="mutagenesis site" description="Prevents the cleavage of trypsinogen." evidence="9">
    <original>K</original>
    <variation>A</variation>
    <location>
        <position position="889"/>
    </location>
</feature>
<feature type="sequence conflict" description="In Ref. 3; AA sequence." evidence="10" ref="3">
    <original>R</original>
    <variation>Y</variation>
    <location>
        <position position="808"/>
    </location>
</feature>
<feature type="strand" evidence="11">
    <location>
        <begin position="815"/>
        <end position="820"/>
    </location>
</feature>
<feature type="strand" evidence="11">
    <location>
        <begin position="823"/>
        <end position="830"/>
    </location>
</feature>
<feature type="strand" evidence="11">
    <location>
        <begin position="832"/>
        <end position="838"/>
    </location>
</feature>
<feature type="helix" evidence="11">
    <location>
        <begin position="840"/>
        <end position="843"/>
    </location>
</feature>
<feature type="helix" evidence="11">
    <location>
        <begin position="850"/>
        <end position="852"/>
    </location>
</feature>
<feature type="strand" evidence="11">
    <location>
        <begin position="853"/>
        <end position="858"/>
    </location>
</feature>
<feature type="strand" evidence="11">
    <location>
        <begin position="871"/>
        <end position="880"/>
    </location>
</feature>
<feature type="turn" evidence="11">
    <location>
        <begin position="886"/>
        <end position="889"/>
    </location>
</feature>
<feature type="strand" evidence="11">
    <location>
        <begin position="894"/>
        <end position="900"/>
    </location>
</feature>
<feature type="strand" evidence="11">
    <location>
        <begin position="925"/>
        <end position="935"/>
    </location>
</feature>
<feature type="strand" evidence="11">
    <location>
        <begin position="945"/>
        <end position="951"/>
    </location>
</feature>
<feature type="helix" evidence="11">
    <location>
        <begin position="954"/>
        <end position="960"/>
    </location>
</feature>
<feature type="strand" evidence="11">
    <location>
        <begin position="970"/>
        <end position="973"/>
    </location>
</feature>
<feature type="strand" evidence="11">
    <location>
        <begin position="990"/>
        <end position="995"/>
    </location>
</feature>
<feature type="strand" evidence="11">
    <location>
        <begin position="998"/>
        <end position="1007"/>
    </location>
</feature>
<feature type="strand" evidence="11">
    <location>
        <begin position="1009"/>
        <end position="1012"/>
    </location>
</feature>
<feature type="strand" evidence="11">
    <location>
        <begin position="1018"/>
        <end position="1022"/>
    </location>
</feature>
<feature type="helix" evidence="11">
    <location>
        <begin position="1023"/>
        <end position="1025"/>
    </location>
</feature>
<feature type="helix" evidence="11">
    <location>
        <begin position="1027"/>
        <end position="1031"/>
    </location>
</feature>
<accession>P98072</accession>
<keyword id="KW-0002">3D-structure</keyword>
<keyword id="KW-0025">Alternative splicing</keyword>
<keyword id="KW-0903">Direct protein sequencing</keyword>
<keyword id="KW-1015">Disulfide bond</keyword>
<keyword id="KW-0325">Glycoprotein</keyword>
<keyword id="KW-0378">Hydrolase</keyword>
<keyword id="KW-0449">Lipoprotein</keyword>
<keyword id="KW-0472">Membrane</keyword>
<keyword id="KW-0519">Myristate</keyword>
<keyword id="KW-0645">Protease</keyword>
<keyword id="KW-1185">Reference proteome</keyword>
<keyword id="KW-0677">Repeat</keyword>
<keyword id="KW-0720">Serine protease</keyword>
<keyword id="KW-0735">Signal-anchor</keyword>
<keyword id="KW-0812">Transmembrane</keyword>
<keyword id="KW-1133">Transmembrane helix</keyword>
<keyword id="KW-0865">Zymogen</keyword>
<reference key="1">
    <citation type="journal article" date="1994" name="Proc. Natl. Acad. Sci. U.S.A.">
        <title>Enterokinase, the initiator of intestinal digestion, is a mosaic protease composed of a distinctive assortment of domains.</title>
        <authorList>
            <person name="Kitamoto Y."/>
            <person name="Yuan X."/>
            <person name="Wu Q."/>
            <person name="McCourt D.W."/>
            <person name="Sadler J.E."/>
        </authorList>
    </citation>
    <scope>NUCLEOTIDE SEQUENCE [MRNA]</scope>
    <scope>PARTIAL PROTEIN SEQUENCE</scope>
    <source>
        <tissue>Duodenum</tissue>
    </source>
</reference>
<reference key="2">
    <citation type="journal article" date="1993" name="J. Biol. Chem.">
        <title>Cloning and functional expression of a cDNA encoding the catalytic subunit of bovine enterokinase.</title>
        <authorList>
            <person name="Lavallie E.R."/>
            <person name="Rehemtulla A."/>
            <person name="Racie L.A."/>
            <person name="Diblasio E.A."/>
            <person name="Ferenz C."/>
            <person name="Grant K.L."/>
            <person name="Light A."/>
            <person name="McCoy J.M."/>
        </authorList>
    </citation>
    <scope>NUCLEOTIDE SEQUENCE [MRNA] OF 801-1035</scope>
    <scope>PARTIAL PROTEIN SEQUENCE</scope>
</reference>
<reference key="3">
    <citation type="journal article" date="1991" name="J. Protein Chem.">
        <title>The amino-terminal sequence of the catalytic subunit of bovine enterokinase.</title>
        <authorList>
            <person name="Light A."/>
            <person name="Janska H."/>
        </authorList>
    </citation>
    <scope>PROTEIN SEQUENCE OF 801-827</scope>
    <source>
        <tissue>Intestine</tissue>
    </source>
</reference>
<reference key="4">
    <citation type="journal article" date="1999" name="J. Mol. Biol.">
        <title>Crystal structure of enteropeptidase light chain complexed with an analog of the trypsinogen activation peptide.</title>
        <authorList>
            <person name="Lu D."/>
            <person name="Futterer K."/>
            <person name="Korolev S."/>
            <person name="Zheng X."/>
            <person name="Tan K."/>
            <person name="Waksman G."/>
            <person name="Sadler J.E."/>
        </authorList>
    </citation>
    <scope>X-RAY CRYSTALLOGRAPHY (2.3 ANGSTROMS) OF 788-1035 IN COMPLEX WITH INHIBITOR</scope>
    <scope>ACTIVE SITE</scope>
    <scope>SUBUNIT</scope>
    <scope>INTERCHAIN DISULFIDE BOND</scope>
    <scope>MUTAGENESIS OF LYS-889</scope>
</reference>
<dbReference type="EC" id="3.4.21.9"/>
<dbReference type="EMBL" id="U09859">
    <property type="protein sequence ID" value="AAB40026.1"/>
    <property type="molecule type" value="mRNA"/>
</dbReference>
<dbReference type="EMBL" id="L19663">
    <property type="protein sequence ID" value="AAA16035.1"/>
    <property type="molecule type" value="mRNA"/>
</dbReference>
<dbReference type="PIR" id="A43090">
    <property type="entry name" value="A43090"/>
</dbReference>
<dbReference type="RefSeq" id="NP_776864.1">
    <molecule id="P98072-1"/>
    <property type="nucleotide sequence ID" value="NM_174439.2"/>
</dbReference>
<dbReference type="PDB" id="1EKB">
    <property type="method" value="X-ray"/>
    <property type="resolution" value="2.30 A"/>
    <property type="chains" value="A=788-800, B=801-1035"/>
</dbReference>
<dbReference type="PDBsum" id="1EKB"/>
<dbReference type="SMR" id="P98072"/>
<dbReference type="FunCoup" id="P98072">
    <property type="interactions" value="26"/>
</dbReference>
<dbReference type="STRING" id="9913.ENSBTAP00000000788"/>
<dbReference type="MEROPS" id="S01.156"/>
<dbReference type="GlyCosmos" id="P98072">
    <property type="glycosylation" value="20 sites, No reported glycans"/>
</dbReference>
<dbReference type="GlyGen" id="P98072">
    <property type="glycosylation" value="20 sites"/>
</dbReference>
<dbReference type="PaxDb" id="9913-ENSBTAP00000000788"/>
<dbReference type="GeneID" id="282009"/>
<dbReference type="KEGG" id="bta:282009"/>
<dbReference type="CTD" id="5651"/>
<dbReference type="eggNOG" id="KOG3627">
    <property type="taxonomic scope" value="Eukaryota"/>
</dbReference>
<dbReference type="HOGENOM" id="CLU_011803_0_0_1"/>
<dbReference type="InParanoid" id="P98072"/>
<dbReference type="OrthoDB" id="425190at2759"/>
<dbReference type="TreeFam" id="TF351678"/>
<dbReference type="BRENDA" id="3.4.21.9">
    <property type="organism ID" value="908"/>
</dbReference>
<dbReference type="EvolutionaryTrace" id="P98072"/>
<dbReference type="Proteomes" id="UP000009136">
    <property type="component" value="Unplaced"/>
</dbReference>
<dbReference type="GO" id="GO:0016020">
    <property type="term" value="C:membrane"/>
    <property type="evidence" value="ECO:0000314"/>
    <property type="project" value="AgBase"/>
</dbReference>
<dbReference type="GO" id="GO:0004252">
    <property type="term" value="F:serine-type endopeptidase activity"/>
    <property type="evidence" value="ECO:0007669"/>
    <property type="project" value="UniProtKB-EC"/>
</dbReference>
<dbReference type="GO" id="GO:0044256">
    <property type="term" value="P:protein digestion"/>
    <property type="evidence" value="ECO:0000304"/>
    <property type="project" value="AgBase"/>
</dbReference>
<dbReference type="GO" id="GO:0032023">
    <property type="term" value="P:trypsinogen activation"/>
    <property type="evidence" value="ECO:0000304"/>
    <property type="project" value="AgBase"/>
</dbReference>
<dbReference type="CDD" id="cd00041">
    <property type="entry name" value="CUB"/>
    <property type="match status" value="2"/>
</dbReference>
<dbReference type="CDD" id="cd00112">
    <property type="entry name" value="LDLa"/>
    <property type="match status" value="2"/>
</dbReference>
<dbReference type="CDD" id="cd06263">
    <property type="entry name" value="MAM"/>
    <property type="match status" value="1"/>
</dbReference>
<dbReference type="CDD" id="cd00190">
    <property type="entry name" value="Tryp_SPc"/>
    <property type="match status" value="1"/>
</dbReference>
<dbReference type="FunFam" id="2.60.120.290:FF:000043">
    <property type="entry name" value="Enteropeptidase"/>
    <property type="match status" value="1"/>
</dbReference>
<dbReference type="FunFam" id="3.10.250.10:FF:000029">
    <property type="entry name" value="Enteropeptidase"/>
    <property type="match status" value="1"/>
</dbReference>
<dbReference type="FunFam" id="3.30.70.960:FF:000007">
    <property type="entry name" value="Enteropeptidase"/>
    <property type="match status" value="1"/>
</dbReference>
<dbReference type="FunFam" id="4.10.400.10:FF:000144">
    <property type="entry name" value="enteropeptidase"/>
    <property type="match status" value="1"/>
</dbReference>
<dbReference type="FunFam" id="2.60.120.200:FF:000128">
    <property type="entry name" value="enteropeptidase isoform X2"/>
    <property type="match status" value="1"/>
</dbReference>
<dbReference type="FunFam" id="2.60.120.290:FF:000038">
    <property type="entry name" value="enteropeptidase isoform X2"/>
    <property type="match status" value="1"/>
</dbReference>
<dbReference type="FunFam" id="4.10.400.10:FF:000149">
    <property type="entry name" value="enteropeptidase isoform X2"/>
    <property type="match status" value="1"/>
</dbReference>
<dbReference type="FunFam" id="2.40.10.10:FF:000003">
    <property type="entry name" value="Transmembrane serine protease 3"/>
    <property type="match status" value="1"/>
</dbReference>
<dbReference type="Gene3D" id="2.60.120.200">
    <property type="match status" value="1"/>
</dbReference>
<dbReference type="Gene3D" id="4.10.400.10">
    <property type="entry name" value="Low-density Lipoprotein Receptor"/>
    <property type="match status" value="2"/>
</dbReference>
<dbReference type="Gene3D" id="3.30.70.960">
    <property type="entry name" value="SEA domain"/>
    <property type="match status" value="1"/>
</dbReference>
<dbReference type="Gene3D" id="2.60.120.290">
    <property type="entry name" value="Spermadhesin, CUB domain"/>
    <property type="match status" value="2"/>
</dbReference>
<dbReference type="Gene3D" id="3.10.250.10">
    <property type="entry name" value="SRCR-like domain"/>
    <property type="match status" value="1"/>
</dbReference>
<dbReference type="Gene3D" id="2.40.10.10">
    <property type="entry name" value="Trypsin-like serine proteases"/>
    <property type="match status" value="2"/>
</dbReference>
<dbReference type="InterPro" id="IPR013320">
    <property type="entry name" value="ConA-like_dom_sf"/>
</dbReference>
<dbReference type="InterPro" id="IPR000859">
    <property type="entry name" value="CUB_dom"/>
</dbReference>
<dbReference type="InterPro" id="IPR036055">
    <property type="entry name" value="LDL_receptor-like_sf"/>
</dbReference>
<dbReference type="InterPro" id="IPR023415">
    <property type="entry name" value="LDLR_class-A_CS"/>
</dbReference>
<dbReference type="InterPro" id="IPR002172">
    <property type="entry name" value="LDrepeatLR_classA_rpt"/>
</dbReference>
<dbReference type="InterPro" id="IPR000998">
    <property type="entry name" value="MAM_dom"/>
</dbReference>
<dbReference type="InterPro" id="IPR011163">
    <property type="entry name" value="Pept_S1A_enterop"/>
</dbReference>
<dbReference type="InterPro" id="IPR009003">
    <property type="entry name" value="Peptidase_S1_PA"/>
</dbReference>
<dbReference type="InterPro" id="IPR043504">
    <property type="entry name" value="Peptidase_S1_PA_chymotrypsin"/>
</dbReference>
<dbReference type="InterPro" id="IPR001314">
    <property type="entry name" value="Peptidase_S1A"/>
</dbReference>
<dbReference type="InterPro" id="IPR000082">
    <property type="entry name" value="SEA_dom"/>
</dbReference>
<dbReference type="InterPro" id="IPR036364">
    <property type="entry name" value="SEA_dom_sf"/>
</dbReference>
<dbReference type="InterPro" id="IPR035914">
    <property type="entry name" value="Sperma_CUB_dom_sf"/>
</dbReference>
<dbReference type="InterPro" id="IPR001190">
    <property type="entry name" value="SRCR"/>
</dbReference>
<dbReference type="InterPro" id="IPR036772">
    <property type="entry name" value="SRCR-like_dom_sf"/>
</dbReference>
<dbReference type="InterPro" id="IPR001254">
    <property type="entry name" value="Trypsin_dom"/>
</dbReference>
<dbReference type="InterPro" id="IPR018114">
    <property type="entry name" value="TRYPSIN_HIS"/>
</dbReference>
<dbReference type="InterPro" id="IPR033116">
    <property type="entry name" value="TRYPSIN_SER"/>
</dbReference>
<dbReference type="PANTHER" id="PTHR24252">
    <property type="entry name" value="ACROSIN-RELATED"/>
    <property type="match status" value="1"/>
</dbReference>
<dbReference type="PANTHER" id="PTHR24252:SF16">
    <property type="entry name" value="TRANSMEMBRANE SERINE PROTEASE 15"/>
    <property type="match status" value="1"/>
</dbReference>
<dbReference type="Pfam" id="PF00431">
    <property type="entry name" value="CUB"/>
    <property type="match status" value="2"/>
</dbReference>
<dbReference type="Pfam" id="PF00057">
    <property type="entry name" value="Ldl_recept_a"/>
    <property type="match status" value="1"/>
</dbReference>
<dbReference type="Pfam" id="PF00629">
    <property type="entry name" value="MAM"/>
    <property type="match status" value="1"/>
</dbReference>
<dbReference type="Pfam" id="PF01390">
    <property type="entry name" value="SEA"/>
    <property type="match status" value="1"/>
</dbReference>
<dbReference type="Pfam" id="PF00530">
    <property type="entry name" value="SRCR"/>
    <property type="match status" value="1"/>
</dbReference>
<dbReference type="Pfam" id="PF00089">
    <property type="entry name" value="Trypsin"/>
    <property type="match status" value="1"/>
</dbReference>
<dbReference type="PIRSF" id="PIRSF001138">
    <property type="entry name" value="Enteropeptidase"/>
    <property type="match status" value="1"/>
</dbReference>
<dbReference type="PRINTS" id="PR00722">
    <property type="entry name" value="CHYMOTRYPSIN"/>
</dbReference>
<dbReference type="SMART" id="SM00042">
    <property type="entry name" value="CUB"/>
    <property type="match status" value="2"/>
</dbReference>
<dbReference type="SMART" id="SM00192">
    <property type="entry name" value="LDLa"/>
    <property type="match status" value="2"/>
</dbReference>
<dbReference type="SMART" id="SM00137">
    <property type="entry name" value="MAM"/>
    <property type="match status" value="1"/>
</dbReference>
<dbReference type="SMART" id="SM00200">
    <property type="entry name" value="SEA"/>
    <property type="match status" value="1"/>
</dbReference>
<dbReference type="SMART" id="SM00202">
    <property type="entry name" value="SR"/>
    <property type="match status" value="1"/>
</dbReference>
<dbReference type="SMART" id="SM00020">
    <property type="entry name" value="Tryp_SPc"/>
    <property type="match status" value="1"/>
</dbReference>
<dbReference type="SUPFAM" id="SSF49899">
    <property type="entry name" value="Concanavalin A-like lectins/glucanases"/>
    <property type="match status" value="1"/>
</dbReference>
<dbReference type="SUPFAM" id="SSF57424">
    <property type="entry name" value="LDL receptor-like module"/>
    <property type="match status" value="2"/>
</dbReference>
<dbReference type="SUPFAM" id="SSF82671">
    <property type="entry name" value="SEA domain"/>
    <property type="match status" value="1"/>
</dbReference>
<dbReference type="SUPFAM" id="SSF49854">
    <property type="entry name" value="Spermadhesin, CUB domain"/>
    <property type="match status" value="2"/>
</dbReference>
<dbReference type="SUPFAM" id="SSF56487">
    <property type="entry name" value="SRCR-like"/>
    <property type="match status" value="1"/>
</dbReference>
<dbReference type="SUPFAM" id="SSF50494">
    <property type="entry name" value="Trypsin-like serine proteases"/>
    <property type="match status" value="1"/>
</dbReference>
<dbReference type="PROSITE" id="PS01180">
    <property type="entry name" value="CUB"/>
    <property type="match status" value="2"/>
</dbReference>
<dbReference type="PROSITE" id="PS01209">
    <property type="entry name" value="LDLRA_1"/>
    <property type="match status" value="2"/>
</dbReference>
<dbReference type="PROSITE" id="PS50068">
    <property type="entry name" value="LDLRA_2"/>
    <property type="match status" value="2"/>
</dbReference>
<dbReference type="PROSITE" id="PS00740">
    <property type="entry name" value="MAM_1"/>
    <property type="match status" value="1"/>
</dbReference>
<dbReference type="PROSITE" id="PS50060">
    <property type="entry name" value="MAM_2"/>
    <property type="match status" value="1"/>
</dbReference>
<dbReference type="PROSITE" id="PS50024">
    <property type="entry name" value="SEA"/>
    <property type="match status" value="1"/>
</dbReference>
<dbReference type="PROSITE" id="PS00420">
    <property type="entry name" value="SRCR_1"/>
    <property type="match status" value="1"/>
</dbReference>
<dbReference type="PROSITE" id="PS50287">
    <property type="entry name" value="SRCR_2"/>
    <property type="match status" value="1"/>
</dbReference>
<dbReference type="PROSITE" id="PS50240">
    <property type="entry name" value="TRYPSIN_DOM"/>
    <property type="match status" value="1"/>
</dbReference>
<dbReference type="PROSITE" id="PS00134">
    <property type="entry name" value="TRYPSIN_HIS"/>
    <property type="match status" value="1"/>
</dbReference>
<dbReference type="PROSITE" id="PS00135">
    <property type="entry name" value="TRYPSIN_SER"/>
    <property type="match status" value="1"/>
</dbReference>
<gene>
    <name type="primary">TMPRSS15</name>
    <name type="synonym">ENTK</name>
    <name type="synonym">PRSS7</name>
</gene>
<comment type="function">
    <text>Responsible for initiating activation of pancreatic proteolytic proenzymes (trypsin, chymotrypsin and carboxypeptidase A). It catalyzes the conversion of trypsinogen to trypsin which in turn activates other proenzymes including chymotrypsinogen, procarboxypeptidases, and proelastases.</text>
</comment>
<comment type="catalytic activity">
    <reaction>
        <text>Activation of trypsinogen by selective cleavage of 6-Lys-|-Ile-7 bond.</text>
        <dbReference type="EC" id="3.4.21.9"/>
    </reaction>
</comment>
<comment type="subunit">
    <text evidence="9">Heterodimer of a catalytic (light) chain and a multidomain (heavy) chain linked by a disulfide bond.</text>
</comment>
<comment type="subcellular location">
    <subcellularLocation>
        <location evidence="10">Membrane</location>
        <topology evidence="10">Single-pass type II membrane protein</topology>
    </subcellularLocation>
</comment>
<comment type="alternative products">
    <event type="alternative splicing"/>
    <isoform>
        <id>P98072-1</id>
        <name>Long</name>
        <sequence type="displayed"/>
    </isoform>
    <isoform>
        <id>P98072-2</id>
        <name>Short</name>
        <sequence type="described" ref="VSP_005386"/>
    </isoform>
</comment>
<comment type="tissue specificity">
    <text>Intestinal brush border.</text>
</comment>
<comment type="PTM">
    <text>The chains are derived from a single precursor that is cleaved by a trypsin-like protease.</text>
</comment>
<comment type="similarity">
    <text evidence="8">Belongs to the peptidase S1 family.</text>
</comment>
<protein>
    <recommendedName>
        <fullName>Enteropeptidase</fullName>
        <ecNumber>3.4.21.9</ecNumber>
    </recommendedName>
    <alternativeName>
        <fullName>Enterokinase</fullName>
    </alternativeName>
    <alternativeName>
        <fullName>Serine protease 7</fullName>
    </alternativeName>
    <alternativeName>
        <fullName>Transmembrane protease serine 15</fullName>
    </alternativeName>
    <component>
        <recommendedName>
            <fullName>Enteropeptidase non-catalytic heavy chain</fullName>
        </recommendedName>
    </component>
    <component>
        <recommendedName>
            <fullName>Enteropeptidase catalytic light chain</fullName>
        </recommendedName>
    </component>
</protein>
<evidence type="ECO:0000250" key="1"/>
<evidence type="ECO:0000255" key="2"/>
<evidence type="ECO:0000255" key="3">
    <source>
        <dbReference type="PROSITE-ProRule" id="PRU00059"/>
    </source>
</evidence>
<evidence type="ECO:0000255" key="4">
    <source>
        <dbReference type="PROSITE-ProRule" id="PRU00124"/>
    </source>
</evidence>
<evidence type="ECO:0000255" key="5">
    <source>
        <dbReference type="PROSITE-ProRule" id="PRU00128"/>
    </source>
</evidence>
<evidence type="ECO:0000255" key="6">
    <source>
        <dbReference type="PROSITE-ProRule" id="PRU00188"/>
    </source>
</evidence>
<evidence type="ECO:0000255" key="7">
    <source>
        <dbReference type="PROSITE-ProRule" id="PRU00196"/>
    </source>
</evidence>
<evidence type="ECO:0000255" key="8">
    <source>
        <dbReference type="PROSITE-ProRule" id="PRU00274"/>
    </source>
</evidence>
<evidence type="ECO:0000269" key="9">
    <source>
    </source>
</evidence>
<evidence type="ECO:0000305" key="10"/>
<evidence type="ECO:0007829" key="11">
    <source>
        <dbReference type="PDB" id="1EKB"/>
    </source>
</evidence>
<name>ENTK_BOVIN</name>